<proteinExistence type="inferred from homology"/>
<dbReference type="EMBL" id="AL939113">
    <property type="protein sequence ID" value="CAC09993.1"/>
    <property type="molecule type" value="Genomic_DNA"/>
</dbReference>
<dbReference type="RefSeq" id="NP_626853.1">
    <property type="nucleotide sequence ID" value="NC_003888.3"/>
</dbReference>
<dbReference type="RefSeq" id="WP_011028457.1">
    <property type="nucleotide sequence ID" value="NZ_VNID01000001.1"/>
</dbReference>
<dbReference type="SMR" id="Q9F316"/>
<dbReference type="FunCoup" id="Q9F316">
    <property type="interactions" value="348"/>
</dbReference>
<dbReference type="STRING" id="100226.gene:17760221"/>
<dbReference type="PaxDb" id="100226-SCO2617"/>
<dbReference type="KEGG" id="sco:SCO2617"/>
<dbReference type="PATRIC" id="fig|100226.15.peg.2663"/>
<dbReference type="eggNOG" id="COG1219">
    <property type="taxonomic scope" value="Bacteria"/>
</dbReference>
<dbReference type="HOGENOM" id="CLU_014218_8_2_11"/>
<dbReference type="InParanoid" id="Q9F316"/>
<dbReference type="OrthoDB" id="9804062at2"/>
<dbReference type="PhylomeDB" id="Q9F316"/>
<dbReference type="Proteomes" id="UP000001973">
    <property type="component" value="Chromosome"/>
</dbReference>
<dbReference type="GO" id="GO:0009376">
    <property type="term" value="C:HslUV protease complex"/>
    <property type="evidence" value="ECO:0000318"/>
    <property type="project" value="GO_Central"/>
</dbReference>
<dbReference type="GO" id="GO:0005524">
    <property type="term" value="F:ATP binding"/>
    <property type="evidence" value="ECO:0000318"/>
    <property type="project" value="GO_Central"/>
</dbReference>
<dbReference type="GO" id="GO:0016887">
    <property type="term" value="F:ATP hydrolysis activity"/>
    <property type="evidence" value="ECO:0000318"/>
    <property type="project" value="GO_Central"/>
</dbReference>
<dbReference type="GO" id="GO:0140662">
    <property type="term" value="F:ATP-dependent protein folding chaperone"/>
    <property type="evidence" value="ECO:0007669"/>
    <property type="project" value="InterPro"/>
</dbReference>
<dbReference type="GO" id="GO:0046983">
    <property type="term" value="F:protein dimerization activity"/>
    <property type="evidence" value="ECO:0007669"/>
    <property type="project" value="InterPro"/>
</dbReference>
<dbReference type="GO" id="GO:0051082">
    <property type="term" value="F:unfolded protein binding"/>
    <property type="evidence" value="ECO:0007669"/>
    <property type="project" value="UniProtKB-UniRule"/>
</dbReference>
<dbReference type="GO" id="GO:0008270">
    <property type="term" value="F:zinc ion binding"/>
    <property type="evidence" value="ECO:0007669"/>
    <property type="project" value="InterPro"/>
</dbReference>
<dbReference type="GO" id="GO:0051301">
    <property type="term" value="P:cell division"/>
    <property type="evidence" value="ECO:0000318"/>
    <property type="project" value="GO_Central"/>
</dbReference>
<dbReference type="GO" id="GO:0051603">
    <property type="term" value="P:proteolysis involved in protein catabolic process"/>
    <property type="evidence" value="ECO:0000318"/>
    <property type="project" value="GO_Central"/>
</dbReference>
<dbReference type="CDD" id="cd19497">
    <property type="entry name" value="RecA-like_ClpX"/>
    <property type="match status" value="1"/>
</dbReference>
<dbReference type="FunFam" id="1.10.8.60:FF:000002">
    <property type="entry name" value="ATP-dependent Clp protease ATP-binding subunit ClpX"/>
    <property type="match status" value="1"/>
</dbReference>
<dbReference type="FunFam" id="3.40.50.300:FF:000005">
    <property type="entry name" value="ATP-dependent Clp protease ATP-binding subunit ClpX"/>
    <property type="match status" value="1"/>
</dbReference>
<dbReference type="Gene3D" id="1.10.8.60">
    <property type="match status" value="1"/>
</dbReference>
<dbReference type="Gene3D" id="6.20.220.10">
    <property type="entry name" value="ClpX chaperone, C4-type zinc finger domain"/>
    <property type="match status" value="1"/>
</dbReference>
<dbReference type="Gene3D" id="3.40.50.300">
    <property type="entry name" value="P-loop containing nucleotide triphosphate hydrolases"/>
    <property type="match status" value="1"/>
</dbReference>
<dbReference type="HAMAP" id="MF_00175">
    <property type="entry name" value="ClpX"/>
    <property type="match status" value="1"/>
</dbReference>
<dbReference type="InterPro" id="IPR003593">
    <property type="entry name" value="AAA+_ATPase"/>
</dbReference>
<dbReference type="InterPro" id="IPR050052">
    <property type="entry name" value="ATP-dep_Clp_protease_ClpX"/>
</dbReference>
<dbReference type="InterPro" id="IPR003959">
    <property type="entry name" value="ATPase_AAA_core"/>
</dbReference>
<dbReference type="InterPro" id="IPR019489">
    <property type="entry name" value="Clp_ATPase_C"/>
</dbReference>
<dbReference type="InterPro" id="IPR004487">
    <property type="entry name" value="Clp_protease_ATP-bd_su_ClpX"/>
</dbReference>
<dbReference type="InterPro" id="IPR046425">
    <property type="entry name" value="ClpX_bact"/>
</dbReference>
<dbReference type="InterPro" id="IPR027417">
    <property type="entry name" value="P-loop_NTPase"/>
</dbReference>
<dbReference type="InterPro" id="IPR010603">
    <property type="entry name" value="Znf_CppX_C4"/>
</dbReference>
<dbReference type="InterPro" id="IPR038366">
    <property type="entry name" value="Znf_CppX_C4_sf"/>
</dbReference>
<dbReference type="NCBIfam" id="TIGR00382">
    <property type="entry name" value="clpX"/>
    <property type="match status" value="1"/>
</dbReference>
<dbReference type="NCBIfam" id="NF003745">
    <property type="entry name" value="PRK05342.1"/>
    <property type="match status" value="1"/>
</dbReference>
<dbReference type="PANTHER" id="PTHR48102:SF7">
    <property type="entry name" value="ATP-DEPENDENT CLP PROTEASE ATP-BINDING SUBUNIT CLPX-LIKE, MITOCHONDRIAL"/>
    <property type="match status" value="1"/>
</dbReference>
<dbReference type="PANTHER" id="PTHR48102">
    <property type="entry name" value="ATP-DEPENDENT CLP PROTEASE ATP-BINDING SUBUNIT CLPX-LIKE, MITOCHONDRIAL-RELATED"/>
    <property type="match status" value="1"/>
</dbReference>
<dbReference type="Pfam" id="PF07724">
    <property type="entry name" value="AAA_2"/>
    <property type="match status" value="1"/>
</dbReference>
<dbReference type="Pfam" id="PF10431">
    <property type="entry name" value="ClpB_D2-small"/>
    <property type="match status" value="1"/>
</dbReference>
<dbReference type="Pfam" id="PF06689">
    <property type="entry name" value="zf-C4_ClpX"/>
    <property type="match status" value="1"/>
</dbReference>
<dbReference type="SMART" id="SM00382">
    <property type="entry name" value="AAA"/>
    <property type="match status" value="1"/>
</dbReference>
<dbReference type="SMART" id="SM01086">
    <property type="entry name" value="ClpB_D2-small"/>
    <property type="match status" value="1"/>
</dbReference>
<dbReference type="SMART" id="SM00994">
    <property type="entry name" value="zf-C4_ClpX"/>
    <property type="match status" value="1"/>
</dbReference>
<dbReference type="SUPFAM" id="SSF57716">
    <property type="entry name" value="Glucocorticoid receptor-like (DNA-binding domain)"/>
    <property type="match status" value="1"/>
</dbReference>
<dbReference type="SUPFAM" id="SSF52540">
    <property type="entry name" value="P-loop containing nucleoside triphosphate hydrolases"/>
    <property type="match status" value="1"/>
</dbReference>
<dbReference type="PROSITE" id="PS51902">
    <property type="entry name" value="CLPX_ZB"/>
    <property type="match status" value="1"/>
</dbReference>
<feature type="chain" id="PRO_0000160430" description="ATP-dependent Clp protease ATP-binding subunit ClpX">
    <location>
        <begin position="1"/>
        <end position="428"/>
    </location>
</feature>
<feature type="domain" description="ClpX-type ZB" evidence="2">
    <location>
        <begin position="1"/>
        <end position="54"/>
    </location>
</feature>
<feature type="binding site" evidence="2">
    <location>
        <position position="13"/>
    </location>
    <ligand>
        <name>Zn(2+)</name>
        <dbReference type="ChEBI" id="CHEBI:29105"/>
    </ligand>
</feature>
<feature type="binding site" evidence="2">
    <location>
        <position position="16"/>
    </location>
    <ligand>
        <name>Zn(2+)</name>
        <dbReference type="ChEBI" id="CHEBI:29105"/>
    </ligand>
</feature>
<feature type="binding site" evidence="2">
    <location>
        <position position="35"/>
    </location>
    <ligand>
        <name>Zn(2+)</name>
        <dbReference type="ChEBI" id="CHEBI:29105"/>
    </ligand>
</feature>
<feature type="binding site" evidence="2">
    <location>
        <position position="38"/>
    </location>
    <ligand>
        <name>Zn(2+)</name>
        <dbReference type="ChEBI" id="CHEBI:29105"/>
    </ligand>
</feature>
<feature type="binding site" evidence="1">
    <location>
        <begin position="123"/>
        <end position="130"/>
    </location>
    <ligand>
        <name>ATP</name>
        <dbReference type="ChEBI" id="CHEBI:30616"/>
    </ligand>
</feature>
<gene>
    <name evidence="1" type="primary">clpX</name>
    <name type="ordered locus">SCO2617</name>
    <name type="ORF">SCC80.02c</name>
</gene>
<keyword id="KW-0067">ATP-binding</keyword>
<keyword id="KW-0143">Chaperone</keyword>
<keyword id="KW-0479">Metal-binding</keyword>
<keyword id="KW-0547">Nucleotide-binding</keyword>
<keyword id="KW-1185">Reference proteome</keyword>
<keyword id="KW-0862">Zinc</keyword>
<name>CLPX_STRCO</name>
<accession>Q9F316</accession>
<sequence length="428" mass="46781">MARIGDGGDLLKCSFCGKSQKQVKKLIAGPGVYICDECIDLCNEIIEEELAETSEVRWEELPKPREIYEFLESYVVGQEAAKKALSVAVYNHYKRVQAGENGGAQGREDAIELAKSNILLLGPTGSGKTLLAQTLARMLNVPFAIADATALTEAGYVGEDVENILLKLIQAADYDVKKAETGIIYIDEIDKVARKSENPSITRDVSGEGVQQALLKILEGTTASVPPQGGRKHPHQEFIQIDTTNVLFIVGGAFAGLEKIIEGRAGAKGIGFGAQIRSKREIESKDQFEQVMPEDLVKFGMIPEFIGRLPVITSVHNLDREALLQILVEPRNALVKQYERLFELDGVELDFERGALEAIADQAILRQTGARGLRAIMEEVLQGVMYEVPSRKDVARVVITADVVLSNVNPTLIPRDSRGRGPGEQKTA</sequence>
<reference key="1">
    <citation type="journal article" date="2002" name="Nature">
        <title>Complete genome sequence of the model actinomycete Streptomyces coelicolor A3(2).</title>
        <authorList>
            <person name="Bentley S.D."/>
            <person name="Chater K.F."/>
            <person name="Cerdeno-Tarraga A.-M."/>
            <person name="Challis G.L."/>
            <person name="Thomson N.R."/>
            <person name="James K.D."/>
            <person name="Harris D.E."/>
            <person name="Quail M.A."/>
            <person name="Kieser H."/>
            <person name="Harper D."/>
            <person name="Bateman A."/>
            <person name="Brown S."/>
            <person name="Chandra G."/>
            <person name="Chen C.W."/>
            <person name="Collins M."/>
            <person name="Cronin A."/>
            <person name="Fraser A."/>
            <person name="Goble A."/>
            <person name="Hidalgo J."/>
            <person name="Hornsby T."/>
            <person name="Howarth S."/>
            <person name="Huang C.-H."/>
            <person name="Kieser T."/>
            <person name="Larke L."/>
            <person name="Murphy L.D."/>
            <person name="Oliver K."/>
            <person name="O'Neil S."/>
            <person name="Rabbinowitsch E."/>
            <person name="Rajandream M.A."/>
            <person name="Rutherford K.M."/>
            <person name="Rutter S."/>
            <person name="Seeger K."/>
            <person name="Saunders D."/>
            <person name="Sharp S."/>
            <person name="Squares R."/>
            <person name="Squares S."/>
            <person name="Taylor K."/>
            <person name="Warren T."/>
            <person name="Wietzorrek A."/>
            <person name="Woodward J.R."/>
            <person name="Barrell B.G."/>
            <person name="Parkhill J."/>
            <person name="Hopwood D.A."/>
        </authorList>
    </citation>
    <scope>NUCLEOTIDE SEQUENCE [LARGE SCALE GENOMIC DNA]</scope>
    <source>
        <strain>ATCC BAA-471 / A3(2) / M145</strain>
    </source>
</reference>
<evidence type="ECO:0000255" key="1">
    <source>
        <dbReference type="HAMAP-Rule" id="MF_00175"/>
    </source>
</evidence>
<evidence type="ECO:0000255" key="2">
    <source>
        <dbReference type="PROSITE-ProRule" id="PRU01250"/>
    </source>
</evidence>
<comment type="function">
    <text evidence="1">ATP-dependent specificity component of the Clp protease. It directs the protease to specific substrates. Can perform chaperone functions in the absence of ClpP.</text>
</comment>
<comment type="subunit">
    <text evidence="1">Component of the ClpX-ClpP complex. Forms a hexameric ring that, in the presence of ATP, binds to fourteen ClpP subunits assembled into a disk-like structure with a central cavity, resembling the structure of eukaryotic proteasomes.</text>
</comment>
<comment type="similarity">
    <text evidence="1">Belongs to the ClpX chaperone family.</text>
</comment>
<protein>
    <recommendedName>
        <fullName evidence="1">ATP-dependent Clp protease ATP-binding subunit ClpX</fullName>
    </recommendedName>
</protein>
<organism>
    <name type="scientific">Streptomyces coelicolor (strain ATCC BAA-471 / A3(2) / M145)</name>
    <dbReference type="NCBI Taxonomy" id="100226"/>
    <lineage>
        <taxon>Bacteria</taxon>
        <taxon>Bacillati</taxon>
        <taxon>Actinomycetota</taxon>
        <taxon>Actinomycetes</taxon>
        <taxon>Kitasatosporales</taxon>
        <taxon>Streptomycetaceae</taxon>
        <taxon>Streptomyces</taxon>
        <taxon>Streptomyces albidoflavus group</taxon>
    </lineage>
</organism>